<comment type="function">
    <text evidence="1">Transcription regulator that activates transcription by stimulating RNA polymerase (RNAP) recycling in case of stress conditions such as supercoiled DNA or high salt concentrations. Probably acts by releasing the RNAP, when it is trapped or immobilized on tightly supercoiled DNA. Does not activate transcription on linear DNA. Probably not involved in DNA repair.</text>
</comment>
<comment type="subunit">
    <text evidence="1">Interacts with the RNAP. Has a higher affinity for the core RNAP than for the holoenzyme. Its ATPase activity is stimulated by binding to RNAP.</text>
</comment>
<comment type="similarity">
    <text evidence="1">Belongs to the SNF2/RAD54 helicase family. RapA subfamily.</text>
</comment>
<accession>B0BT63</accession>
<proteinExistence type="inferred from homology"/>
<evidence type="ECO:0000255" key="1">
    <source>
        <dbReference type="HAMAP-Rule" id="MF_01821"/>
    </source>
</evidence>
<reference key="1">
    <citation type="journal article" date="2008" name="PLoS ONE">
        <title>Genome biology of Actinobacillus pleuropneumoniae JL03, an isolate of serotype 3 prevalent in China.</title>
        <authorList>
            <person name="Xu Z."/>
            <person name="Zhou Y."/>
            <person name="Li L."/>
            <person name="Zhou R."/>
            <person name="Xiao S."/>
            <person name="Wan Y."/>
            <person name="Zhang S."/>
            <person name="Wang K."/>
            <person name="Li W."/>
            <person name="Li L."/>
            <person name="Jin H."/>
            <person name="Kang M."/>
            <person name="Dalai B."/>
            <person name="Li T."/>
            <person name="Liu L."/>
            <person name="Cheng Y."/>
            <person name="Zhang L."/>
            <person name="Xu T."/>
            <person name="Zheng H."/>
            <person name="Pu S."/>
            <person name="Wang B."/>
            <person name="Gu W."/>
            <person name="Zhang X.L."/>
            <person name="Zhu G.-F."/>
            <person name="Wang S."/>
            <person name="Zhao G.-P."/>
            <person name="Chen H."/>
        </authorList>
    </citation>
    <scope>NUCLEOTIDE SEQUENCE [LARGE SCALE GENOMIC DNA]</scope>
    <source>
        <strain>JL03</strain>
    </source>
</reference>
<dbReference type="EC" id="3.6.4.-" evidence="1"/>
<dbReference type="EMBL" id="CP000687">
    <property type="protein sequence ID" value="ABY68920.1"/>
    <property type="molecule type" value="Genomic_DNA"/>
</dbReference>
<dbReference type="RefSeq" id="WP_012262777.1">
    <property type="nucleotide sequence ID" value="NC_010278.1"/>
</dbReference>
<dbReference type="SMR" id="B0BT63"/>
<dbReference type="KEGG" id="apj:APJL_0329"/>
<dbReference type="HOGENOM" id="CLU_011520_0_0_6"/>
<dbReference type="Proteomes" id="UP000008547">
    <property type="component" value="Chromosome"/>
</dbReference>
<dbReference type="GO" id="GO:0005524">
    <property type="term" value="F:ATP binding"/>
    <property type="evidence" value="ECO:0007669"/>
    <property type="project" value="UniProtKB-UniRule"/>
</dbReference>
<dbReference type="GO" id="GO:0003677">
    <property type="term" value="F:DNA binding"/>
    <property type="evidence" value="ECO:0007669"/>
    <property type="project" value="UniProtKB-KW"/>
</dbReference>
<dbReference type="GO" id="GO:0004386">
    <property type="term" value="F:helicase activity"/>
    <property type="evidence" value="ECO:0007669"/>
    <property type="project" value="UniProtKB-UniRule"/>
</dbReference>
<dbReference type="GO" id="GO:0016817">
    <property type="term" value="F:hydrolase activity, acting on acid anhydrides"/>
    <property type="evidence" value="ECO:0007669"/>
    <property type="project" value="InterPro"/>
</dbReference>
<dbReference type="GO" id="GO:0006355">
    <property type="term" value="P:regulation of DNA-templated transcription"/>
    <property type="evidence" value="ECO:0007669"/>
    <property type="project" value="UniProtKB-UniRule"/>
</dbReference>
<dbReference type="CDD" id="cd18011">
    <property type="entry name" value="DEXDc_RapA"/>
    <property type="match status" value="1"/>
</dbReference>
<dbReference type="CDD" id="cd18793">
    <property type="entry name" value="SF2_C_SNF"/>
    <property type="match status" value="1"/>
</dbReference>
<dbReference type="Gene3D" id="2.30.30.140">
    <property type="match status" value="1"/>
</dbReference>
<dbReference type="Gene3D" id="2.30.30.930">
    <property type="match status" value="1"/>
</dbReference>
<dbReference type="Gene3D" id="3.30.360.80">
    <property type="match status" value="1"/>
</dbReference>
<dbReference type="Gene3D" id="6.10.140.1500">
    <property type="match status" value="1"/>
</dbReference>
<dbReference type="Gene3D" id="6.10.140.2230">
    <property type="match status" value="1"/>
</dbReference>
<dbReference type="Gene3D" id="3.40.50.300">
    <property type="entry name" value="P-loop containing nucleotide triphosphate hydrolases"/>
    <property type="match status" value="1"/>
</dbReference>
<dbReference type="Gene3D" id="3.40.50.10810">
    <property type="entry name" value="Tandem AAA-ATPase domain"/>
    <property type="match status" value="1"/>
</dbReference>
<dbReference type="HAMAP" id="MF_01821">
    <property type="entry name" value="Helicase_RapA"/>
    <property type="match status" value="1"/>
</dbReference>
<dbReference type="InterPro" id="IPR014001">
    <property type="entry name" value="Helicase_ATP-bd"/>
</dbReference>
<dbReference type="InterPro" id="IPR001650">
    <property type="entry name" value="Helicase_C-like"/>
</dbReference>
<dbReference type="InterPro" id="IPR023949">
    <property type="entry name" value="Helicase_RapA"/>
</dbReference>
<dbReference type="InterPro" id="IPR027417">
    <property type="entry name" value="P-loop_NTPase"/>
</dbReference>
<dbReference type="InterPro" id="IPR022737">
    <property type="entry name" value="RapA_C"/>
</dbReference>
<dbReference type="InterPro" id="IPR038718">
    <property type="entry name" value="SNF2-like_sf"/>
</dbReference>
<dbReference type="InterPro" id="IPR049730">
    <property type="entry name" value="SNF2/RAD54-like_C"/>
</dbReference>
<dbReference type="InterPro" id="IPR000330">
    <property type="entry name" value="SNF2_N"/>
</dbReference>
<dbReference type="InterPro" id="IPR040765">
    <property type="entry name" value="Tudor_1_RapA"/>
</dbReference>
<dbReference type="InterPro" id="IPR040766">
    <property type="entry name" value="Tudor_2_RapA"/>
</dbReference>
<dbReference type="NCBIfam" id="NF003426">
    <property type="entry name" value="PRK04914.1"/>
    <property type="match status" value="1"/>
</dbReference>
<dbReference type="PANTHER" id="PTHR45766">
    <property type="entry name" value="DNA ANNEALING HELICASE AND ENDONUCLEASE ZRANB3 FAMILY MEMBER"/>
    <property type="match status" value="1"/>
</dbReference>
<dbReference type="PANTHER" id="PTHR45766:SF6">
    <property type="entry name" value="SWI_SNF-RELATED MATRIX-ASSOCIATED ACTIN-DEPENDENT REGULATOR OF CHROMATIN SUBFAMILY A-LIKE PROTEIN 1"/>
    <property type="match status" value="1"/>
</dbReference>
<dbReference type="Pfam" id="PF00271">
    <property type="entry name" value="Helicase_C"/>
    <property type="match status" value="1"/>
</dbReference>
<dbReference type="Pfam" id="PF12137">
    <property type="entry name" value="RapA_C"/>
    <property type="match status" value="1"/>
</dbReference>
<dbReference type="Pfam" id="PF00176">
    <property type="entry name" value="SNF2-rel_dom"/>
    <property type="match status" value="1"/>
</dbReference>
<dbReference type="Pfam" id="PF18339">
    <property type="entry name" value="Tudor_1_RapA"/>
    <property type="match status" value="1"/>
</dbReference>
<dbReference type="Pfam" id="PF18337">
    <property type="entry name" value="Tudor_RapA"/>
    <property type="match status" value="1"/>
</dbReference>
<dbReference type="SMART" id="SM00487">
    <property type="entry name" value="DEXDc"/>
    <property type="match status" value="1"/>
</dbReference>
<dbReference type="SMART" id="SM00490">
    <property type="entry name" value="HELICc"/>
    <property type="match status" value="1"/>
</dbReference>
<dbReference type="SUPFAM" id="SSF52540">
    <property type="entry name" value="P-loop containing nucleoside triphosphate hydrolases"/>
    <property type="match status" value="2"/>
</dbReference>
<dbReference type="PROSITE" id="PS51192">
    <property type="entry name" value="HELICASE_ATP_BIND_1"/>
    <property type="match status" value="1"/>
</dbReference>
<dbReference type="PROSITE" id="PS51194">
    <property type="entry name" value="HELICASE_CTER"/>
    <property type="match status" value="1"/>
</dbReference>
<name>RAPA_ACTPJ</name>
<keyword id="KW-0010">Activator</keyword>
<keyword id="KW-0067">ATP-binding</keyword>
<keyword id="KW-0238">DNA-binding</keyword>
<keyword id="KW-0347">Helicase</keyword>
<keyword id="KW-0378">Hydrolase</keyword>
<keyword id="KW-0547">Nucleotide-binding</keyword>
<keyword id="KW-0804">Transcription</keyword>
<keyword id="KW-0805">Transcription regulation</keyword>
<feature type="chain" id="PRO_1000188166" description="RNA polymerase-associated protein RapA">
    <location>
        <begin position="1"/>
        <end position="969"/>
    </location>
</feature>
<feature type="domain" description="Helicase ATP-binding" evidence="1">
    <location>
        <begin position="162"/>
        <end position="339"/>
    </location>
</feature>
<feature type="domain" description="Helicase C-terminal" evidence="1">
    <location>
        <begin position="492"/>
        <end position="663"/>
    </location>
</feature>
<feature type="short sequence motif" description="DEAH box">
    <location>
        <begin position="285"/>
        <end position="288"/>
    </location>
</feature>
<feature type="binding site" evidence="1">
    <location>
        <begin position="175"/>
        <end position="182"/>
    </location>
    <ligand>
        <name>ATP</name>
        <dbReference type="ChEBI" id="CHEBI:30616"/>
    </ligand>
</feature>
<protein>
    <recommendedName>
        <fullName evidence="1">RNA polymerase-associated protein RapA</fullName>
        <ecNumber evidence="1">3.6.4.-</ecNumber>
    </recommendedName>
    <alternativeName>
        <fullName evidence="1">ATP-dependent helicase HepA</fullName>
    </alternativeName>
</protein>
<organism>
    <name type="scientific">Actinobacillus pleuropneumoniae serotype 3 (strain JL03)</name>
    <dbReference type="NCBI Taxonomy" id="434271"/>
    <lineage>
        <taxon>Bacteria</taxon>
        <taxon>Pseudomonadati</taxon>
        <taxon>Pseudomonadota</taxon>
        <taxon>Gammaproteobacteria</taxon>
        <taxon>Pasteurellales</taxon>
        <taxon>Pasteurellaceae</taxon>
        <taxon>Actinobacillus</taxon>
    </lineage>
</organism>
<gene>
    <name evidence="1" type="primary">rapA</name>
    <name type="ordered locus">APJL_0329</name>
</gene>
<sequence>MFVVGQRWISESENNLGLGIVTASDNRTVTIQFPAAEEERIYALSVAPLTRVQFQKGDRINSVEGWQLDVEEVVENQGFIIYLGKRADSGEEAVLPEMQLDHKVSFSKPQDRLFSAQIDRSDRFALRYRALQHQQAQFQSPLRGMRGIRASLIPHQLHIAKEVGQRVAPRVLLADEVGLGKTIEAGMILQQQLFSGRVERVLVLVPESLQHQWLVEMLRRFNLKFSLFDEERCADFDKADEDGNDVSENPFDSEALVIASIDWLESSPNRAKQVLASNWDMLIVDEAHHLEWSENEPSVGYQFVERLSKQTSAVLLLTATPEQLGQESHFARLALLDADRFYDYNSFVAEQKDYKPVADAVATLLNDKPLSNDEQNSIADLLSEKDTEPMFKVINSEKSKENDRLQVRQELIRELIDRHGTSRVLFRNTRQGVKGFPHRVYHQITLEMPSQYTNALKVMGMMGGVTKDDQLYPERLFQRMNPAAKWADFDPRIEWLITFLKNHRDEKILVICKQADTAIALEQILREREAIRSAVFHEKMSIVERDRASAYFAQMEEGAQVLISSSIGSEGRNFQFASNLVLFNLPDNPDLLEQSIGRLDRIGQKNDIQIHVPCFENSMQMILATWYHQGLNAFEETCPMGAALFREFGEELEIFLKNPQAVGFDEFLAKTFKRQQHLKAELEQGRDRLLELNSNGGEAAQALAEAIAKEDNNPHLVNFALSLFDVIGLEQEDLGEQSIVISPTGHMLVPDFPGIAEDGTTVTFDRQLALMREDVEFLTWDHPMIRNGIDLITSGYIGKSAISLLINKNLPAGTLLLEAIYMVETQAPKGLNLTRFLPPTPVRILLDNKGNDMAAQVSFAGLEKQLKPLNKQMANKIAKMAQADIKKLIGISEQKIAAKLPELIEKASQDADSTLSAELHRLTSLQAVNKNIRSDEIEALEQQRIESLKQIALANWRLDSLRVIVSNKE</sequence>